<sequence length="572" mass="63931">MGSSQSVVTALQTVLKQRDLKIAPRTLQNFMKEVDRVAPWYACSGSLTVASWNKLGKELDRKHAEGDLCLGTKAIWKLVKNCLEDEACHPAIIESQGTLEEVQDSMSETERSERMGARKRKDMSKKKGPPQEVKKGGEKEGSYHSPLNKSKKKKKPESSQYPAVELEALELDNSDSDTLDSSEEGGLEEEVARYEEKRYHPDRHRPLKTKMNVRPPPINPAGSRPSAPPPYELRLNTGTDSFLPLEERRKIQMAFPVFENAEGGRVHTPVDYNQIKELAESVRNYGVNANFTTLQVERLANFAMTPTDWQTTVKAVLPNMGQYMEWKALWYDAAQAQARVNATAGRSSGHLTKIVQGPQEPFSDFVARMTEAASRIFGDSEQAMPLIEQLVYEQATQECRAAIAPRKSKGLQDWLRVCRELGGPLTNAGLAAAILQTHRYRDLSNRKACFNCGRMGHLKKDCQAPERTRESKLCYRCGKGYHRASECGIMDSGADKSIISLHWWPKSWPTVVSSHSLQGLGYQSSPAISASALTWRDAEGKQGCFTPYVLPLPVNLWGRDVLQAMGMTLTNE</sequence>
<accession>P04023</accession>
<dbReference type="EC" id="3.4.23.-" evidence="3"/>
<dbReference type="PIR" id="A03952">
    <property type="entry name" value="FOHYIH"/>
</dbReference>
<dbReference type="SMR" id="P04023"/>
<dbReference type="GO" id="GO:0004190">
    <property type="term" value="F:aspartic-type endopeptidase activity"/>
    <property type="evidence" value="ECO:0007669"/>
    <property type="project" value="UniProtKB-KW"/>
</dbReference>
<dbReference type="GO" id="GO:0003676">
    <property type="term" value="F:nucleic acid binding"/>
    <property type="evidence" value="ECO:0007669"/>
    <property type="project" value="InterPro"/>
</dbReference>
<dbReference type="GO" id="GO:0005198">
    <property type="term" value="F:structural molecule activity"/>
    <property type="evidence" value="ECO:0007669"/>
    <property type="project" value="InterPro"/>
</dbReference>
<dbReference type="GO" id="GO:0008270">
    <property type="term" value="F:zinc ion binding"/>
    <property type="evidence" value="ECO:0007669"/>
    <property type="project" value="UniProtKB-KW"/>
</dbReference>
<dbReference type="GO" id="GO:0006508">
    <property type="term" value="P:proteolysis"/>
    <property type="evidence" value="ECO:0007669"/>
    <property type="project" value="UniProtKB-KW"/>
</dbReference>
<dbReference type="GO" id="GO:0016032">
    <property type="term" value="P:viral process"/>
    <property type="evidence" value="ECO:0007669"/>
    <property type="project" value="InterPro"/>
</dbReference>
<dbReference type="CDD" id="cd05482">
    <property type="entry name" value="HIV_retropepsin_like"/>
    <property type="match status" value="1"/>
</dbReference>
<dbReference type="Gene3D" id="2.40.70.10">
    <property type="entry name" value="Acid Proteases"/>
    <property type="match status" value="1"/>
</dbReference>
<dbReference type="Gene3D" id="1.10.375.10">
    <property type="entry name" value="Human Immunodeficiency Virus Type 1 Capsid Protein"/>
    <property type="match status" value="1"/>
</dbReference>
<dbReference type="Gene3D" id="1.10.150.490">
    <property type="entry name" value="Retroviral GAG p10 protein"/>
    <property type="match status" value="1"/>
</dbReference>
<dbReference type="Gene3D" id="4.10.60.10">
    <property type="entry name" value="Zinc finger, CCHC-type"/>
    <property type="match status" value="1"/>
</dbReference>
<dbReference type="InterPro" id="IPR003322">
    <property type="entry name" value="B_retro_matrix"/>
</dbReference>
<dbReference type="InterPro" id="IPR038124">
    <property type="entry name" value="B_retro_matrix_sf"/>
</dbReference>
<dbReference type="InterPro" id="IPR045345">
    <property type="entry name" value="Gag_p24_C"/>
</dbReference>
<dbReference type="InterPro" id="IPR001995">
    <property type="entry name" value="Peptidase_A2_cat"/>
</dbReference>
<dbReference type="InterPro" id="IPR021109">
    <property type="entry name" value="Peptidase_aspartic_dom_sf"/>
</dbReference>
<dbReference type="InterPro" id="IPR050195">
    <property type="entry name" value="Primate_lentivir_Gag_pol-like"/>
</dbReference>
<dbReference type="InterPro" id="IPR034170">
    <property type="entry name" value="Retropepsin-like_cat_dom"/>
</dbReference>
<dbReference type="InterPro" id="IPR018061">
    <property type="entry name" value="Retropepsins"/>
</dbReference>
<dbReference type="InterPro" id="IPR008919">
    <property type="entry name" value="Retrov_capsid_N"/>
</dbReference>
<dbReference type="InterPro" id="IPR010999">
    <property type="entry name" value="Retrovr_matrix"/>
</dbReference>
<dbReference type="InterPro" id="IPR001878">
    <property type="entry name" value="Znf_CCHC"/>
</dbReference>
<dbReference type="InterPro" id="IPR036875">
    <property type="entry name" value="Znf_CCHC_sf"/>
</dbReference>
<dbReference type="PANTHER" id="PTHR40389">
    <property type="entry name" value="ENDOGENOUS RETROVIRUS GROUP K MEMBER 24 GAG POLYPROTEIN-RELATED"/>
    <property type="match status" value="1"/>
</dbReference>
<dbReference type="PANTHER" id="PTHR40389:SF3">
    <property type="entry name" value="IGE-BINDING PROTEIN"/>
    <property type="match status" value="1"/>
</dbReference>
<dbReference type="Pfam" id="PF02337">
    <property type="entry name" value="Gag_p10"/>
    <property type="match status" value="1"/>
</dbReference>
<dbReference type="Pfam" id="PF00607">
    <property type="entry name" value="Gag_p24"/>
    <property type="match status" value="1"/>
</dbReference>
<dbReference type="Pfam" id="PF19317">
    <property type="entry name" value="Gag_p24_C"/>
    <property type="match status" value="1"/>
</dbReference>
<dbReference type="Pfam" id="PF00077">
    <property type="entry name" value="RVP"/>
    <property type="match status" value="1"/>
</dbReference>
<dbReference type="Pfam" id="PF00098">
    <property type="entry name" value="zf-CCHC"/>
    <property type="match status" value="1"/>
</dbReference>
<dbReference type="SMART" id="SM00343">
    <property type="entry name" value="ZnF_C2HC"/>
    <property type="match status" value="2"/>
</dbReference>
<dbReference type="SUPFAM" id="SSF50630">
    <property type="entry name" value="Acid proteases"/>
    <property type="match status" value="1"/>
</dbReference>
<dbReference type="SUPFAM" id="SSF47836">
    <property type="entry name" value="Retroviral matrix proteins"/>
    <property type="match status" value="1"/>
</dbReference>
<dbReference type="SUPFAM" id="SSF47353">
    <property type="entry name" value="Retrovirus capsid dimerization domain-like"/>
    <property type="match status" value="1"/>
</dbReference>
<dbReference type="SUPFAM" id="SSF47943">
    <property type="entry name" value="Retrovirus capsid protein, N-terminal core domain"/>
    <property type="match status" value="1"/>
</dbReference>
<dbReference type="SUPFAM" id="SSF57756">
    <property type="entry name" value="Retrovirus zinc finger-like domains"/>
    <property type="match status" value="1"/>
</dbReference>
<dbReference type="PROSITE" id="PS50175">
    <property type="entry name" value="ASP_PROT_RETROV"/>
    <property type="match status" value="1"/>
</dbReference>
<dbReference type="PROSITE" id="PS50158">
    <property type="entry name" value="ZF_CCHC"/>
    <property type="match status" value="2"/>
</dbReference>
<keyword id="KW-0064">Aspartyl protease</keyword>
<keyword id="KW-0378">Hydrolase</keyword>
<keyword id="KW-0479">Metal-binding</keyword>
<keyword id="KW-0645">Protease</keyword>
<keyword id="KW-0677">Repeat</keyword>
<keyword id="KW-0814">Transposable element</keyword>
<keyword id="KW-0862">Zinc</keyword>
<keyword id="KW-0863">Zinc-finger</keyword>
<reference key="1">
    <citation type="journal article" date="1985" name="J. Virol.">
        <title>Nucleotide sequence of the Syrian hamster intracisternal A-particle gene: close evolutionary relationship of type A particle gene to types B and D oncovirus genes.</title>
        <authorList>
            <person name="Ono M."/>
            <person name="Toh H."/>
            <person name="Miyata T."/>
            <person name="Awaya T."/>
        </authorList>
    </citation>
    <scope>NUCLEOTIDE SEQUENCE</scope>
</reference>
<gene>
    <name type="primary">gag</name>
</gene>
<protein>
    <recommendedName>
        <fullName>Intracisternal A-particle Gag-related polyprotein</fullName>
    </recommendedName>
    <component>
        <recommendedName>
            <fullName>Matrix protein</fullName>
        </recommendedName>
    </component>
    <component>
        <recommendedName>
            <fullName>Phosphorylated protein</fullName>
        </recommendedName>
    </component>
    <component>
        <recommendedName>
            <fullName>Capsid protein</fullName>
        </recommendedName>
    </component>
    <component>
        <recommendedName>
            <fullName>Nucleocapsid protein</fullName>
        </recommendedName>
    </component>
    <component>
        <recommendedName>
            <fullName>Protease</fullName>
            <ecNumber evidence="3">3.4.23.-</ecNumber>
        </recommendedName>
    </component>
</protein>
<organism>
    <name type="scientific">Hamster intracisternal a-particle H18</name>
    <name type="common">IAP-H18</name>
    <dbReference type="NCBI Taxonomy" id="11752"/>
    <lineage>
        <taxon>Viruses</taxon>
        <taxon>Riboviria</taxon>
        <taxon>Pararnavirae</taxon>
        <taxon>Artverviricota</taxon>
        <taxon>Revtraviricetes</taxon>
        <taxon>Ortervirales</taxon>
        <taxon>Retroviridae</taxon>
        <taxon>Intracisternal A-particles</taxon>
    </lineage>
</organism>
<organismHost>
    <name type="scientific">Cricetinae</name>
    <name type="common">hamsters</name>
    <dbReference type="NCBI Taxonomy" id="10026"/>
</organismHost>
<proteinExistence type="inferred from homology"/>
<comment type="function">
    <molecule>Protease</molecule>
    <text evidence="3">The aspartyl protease mediates proteolytic cleavages of Gag and Gag-Pol polyproteins during or shortly after the release of the virion from the plasma membrane. Cleavages take place as an ordered, step-wise cascade to yield mature proteins. This process is called maturation. Displays maximal activity during the budding process just prior to particle release from the cell.</text>
</comment>
<comment type="miscellaneous">
    <molecule>Intracisternal A-particle Gag-related polyprotein</molecule>
    <text evidence="5">Intracisternal A particles (IAPs) are defective retroviral elements. Due to extensive mutations in the envelope coding sequence, IAPs can only form defective viral particles confined to the intracisternae of the Golgi. IAPs are an important class of transposable elements that induce genomic mutations and cell transformation by disrupting gene expression.</text>
</comment>
<evidence type="ECO:0000250" key="1">
    <source>
        <dbReference type="UniProtKB" id="P07567"/>
    </source>
</evidence>
<evidence type="ECO:0000255" key="2">
    <source>
        <dbReference type="PROSITE-ProRule" id="PRU00047"/>
    </source>
</evidence>
<evidence type="ECO:0000255" key="3">
    <source>
        <dbReference type="PROSITE-ProRule" id="PRU00275"/>
    </source>
</evidence>
<evidence type="ECO:0000256" key="4">
    <source>
        <dbReference type="SAM" id="MobiDB-lite"/>
    </source>
</evidence>
<evidence type="ECO:0000305" key="5"/>
<name>GAG_IPHA</name>
<feature type="chain" id="PRO_0000443275" description="Intracisternal A-particle Gag-related polyprotein">
    <location>
        <begin position="1"/>
        <end position="572"/>
    </location>
</feature>
<feature type="chain" id="PRO_0000443276" description="Matrix protein">
    <location>
        <begin position="1"/>
        <end position="92"/>
    </location>
</feature>
<feature type="chain" id="PRO_0000443277" description="Phosphorylated protein">
    <location>
        <begin position="93"/>
        <end position="255"/>
    </location>
</feature>
<feature type="chain" id="PRO_0000443278" description="Capsid protein">
    <location>
        <begin position="256"/>
        <end position="431"/>
    </location>
</feature>
<feature type="chain" id="PRO_0000443279" description="Nucleocapsid protein">
    <location>
        <begin position="432"/>
        <end status="unknown"/>
    </location>
</feature>
<feature type="chain" id="PRO_0000026122" description="Protease">
    <location>
        <begin status="unknown"/>
        <end position="572"/>
    </location>
</feature>
<feature type="domain" description="Peptidase A2" evidence="3">
    <location>
        <begin position="486"/>
        <end position="561"/>
    </location>
</feature>
<feature type="zinc finger region" description="CCHC-type 1" evidence="2">
    <location>
        <begin position="447"/>
        <end position="464"/>
    </location>
</feature>
<feature type="zinc finger region" description="CCHC-type 2" evidence="2">
    <location>
        <begin position="472"/>
        <end position="489"/>
    </location>
</feature>
<feature type="region of interest" description="Disordered" evidence="4">
    <location>
        <begin position="99"/>
        <end position="230"/>
    </location>
</feature>
<feature type="compositionally biased region" description="Basic residues" evidence="4">
    <location>
        <begin position="117"/>
        <end position="128"/>
    </location>
</feature>
<feature type="compositionally biased region" description="Basic and acidic residues" evidence="4">
    <location>
        <begin position="132"/>
        <end position="142"/>
    </location>
</feature>
<feature type="compositionally biased region" description="Acidic residues" evidence="4">
    <location>
        <begin position="167"/>
        <end position="189"/>
    </location>
</feature>
<feature type="compositionally biased region" description="Basic and acidic residues" evidence="4">
    <location>
        <begin position="190"/>
        <end position="199"/>
    </location>
</feature>
<feature type="active site" description="Protease; shared with dimeric partner" evidence="3">
    <location>
        <position position="491"/>
    </location>
</feature>
<feature type="site" description="Cleavage; by viral protease" evidence="1">
    <location>
        <begin position="92"/>
        <end position="93"/>
    </location>
</feature>
<feature type="site" description="Cleavage; by viral protease" evidence="1">
    <location>
        <begin position="255"/>
        <end position="256"/>
    </location>
</feature>
<feature type="site" description="Cleavage; by viral protease" evidence="1">
    <location>
        <begin position="299"/>
        <end position="300"/>
    </location>
</feature>
<feature type="site" description="Cleavage; by viral protease" evidence="1">
    <location>
        <begin position="431"/>
        <end position="432"/>
    </location>
</feature>